<organism>
    <name type="scientific">Arabidopsis thaliana</name>
    <name type="common">Mouse-ear cress</name>
    <dbReference type="NCBI Taxonomy" id="3702"/>
    <lineage>
        <taxon>Eukaryota</taxon>
        <taxon>Viridiplantae</taxon>
        <taxon>Streptophyta</taxon>
        <taxon>Embryophyta</taxon>
        <taxon>Tracheophyta</taxon>
        <taxon>Spermatophyta</taxon>
        <taxon>Magnoliopsida</taxon>
        <taxon>eudicotyledons</taxon>
        <taxon>Gunneridae</taxon>
        <taxon>Pentapetalae</taxon>
        <taxon>rosids</taxon>
        <taxon>malvids</taxon>
        <taxon>Brassicales</taxon>
        <taxon>Brassicaceae</taxon>
        <taxon>Camelineae</taxon>
        <taxon>Arabidopsis</taxon>
    </lineage>
</organism>
<name>MY106_ARATH</name>
<gene>
    <name evidence="6" type="primary">MYB106</name>
    <name evidence="7" type="synonym">NOK</name>
    <name evidence="9" type="ordered locus">At3g01140</name>
    <name evidence="10" type="ORF">T4P13.17</name>
</gene>
<keyword id="KW-0217">Developmental protein</keyword>
<keyword id="KW-0238">DNA-binding</keyword>
<keyword id="KW-0539">Nucleus</keyword>
<keyword id="KW-1185">Reference proteome</keyword>
<keyword id="KW-0677">Repeat</keyword>
<keyword id="KW-0804">Transcription</keyword>
<keyword id="KW-0805">Transcription regulation</keyword>
<evidence type="ECO:0000255" key="1">
    <source>
        <dbReference type="PROSITE-ProRule" id="PRU00625"/>
    </source>
</evidence>
<evidence type="ECO:0000269" key="2">
    <source>
    </source>
</evidence>
<evidence type="ECO:0000269" key="3">
    <source>
    </source>
</evidence>
<evidence type="ECO:0000269" key="4">
    <source>
    </source>
</evidence>
<evidence type="ECO:0000269" key="5">
    <source>
    </source>
</evidence>
<evidence type="ECO:0000303" key="6">
    <source>
    </source>
</evidence>
<evidence type="ECO:0000303" key="7">
    <source>
    </source>
</evidence>
<evidence type="ECO:0000305" key="8"/>
<evidence type="ECO:0000312" key="9">
    <source>
        <dbReference type="Araport" id="AT3G01140"/>
    </source>
</evidence>
<evidence type="ECO:0000312" key="10">
    <source>
        <dbReference type="EMBL" id="AAF26160.1"/>
    </source>
</evidence>
<comment type="function">
    <text evidence="2 3 4 5">Functions as a repressor of epidermal cell outgrowth and negatively regulate trichome branch formation (PubMed:18805951, PubMed:21070410). Acts both as a positive and a negative regulator of cellular outgrowth. Promotes both trichome expansion and branch formation (PubMed:21070410). Coordinately with WIN1/SHN1, participates in the regulation of cuticle biosynthesis and wax accumulation in reproductive organs and trichomes. Functions in cuticle nanoridge formation in petals and stamens, and in morphogenesis of petal conical cells and trichomes (PubMed:23709630). May play a role in the regulation of cuticle formation in vegetative organs (PubMed:24169067).</text>
</comment>
<comment type="subcellular location">
    <subcellularLocation>
        <location evidence="1">Nucleus</location>
    </subcellularLocation>
</comment>
<comment type="tissue specificity">
    <text evidence="2">Expressed in trichomes, stems, carpels, petals and stamens.</text>
</comment>
<comment type="disruption phenotype">
    <text evidence="2">Overbranched trichomes.</text>
</comment>
<dbReference type="EMBL" id="AF249309">
    <property type="protein sequence ID" value="AAF65559.1"/>
    <property type="molecule type" value="mRNA"/>
</dbReference>
<dbReference type="EMBL" id="AY519581">
    <property type="protein sequence ID" value="AAS10051.1"/>
    <property type="molecule type" value="mRNA"/>
</dbReference>
<dbReference type="EMBL" id="AC008261">
    <property type="protein sequence ID" value="AAF26160.1"/>
    <property type="molecule type" value="Genomic_DNA"/>
</dbReference>
<dbReference type="EMBL" id="CP002686">
    <property type="protein sequence ID" value="ANM64392.1"/>
    <property type="molecule type" value="Genomic_DNA"/>
</dbReference>
<dbReference type="RefSeq" id="NP_001326423.1">
    <property type="nucleotide sequence ID" value="NM_001337322.1"/>
</dbReference>
<dbReference type="SMR" id="Q9LE63"/>
<dbReference type="STRING" id="3702.Q9LE63"/>
<dbReference type="PaxDb" id="3702-AT3G01140.1"/>
<dbReference type="ProteomicsDB" id="251207"/>
<dbReference type="EnsemblPlants" id="AT3G01140.2">
    <property type="protein sequence ID" value="AT3G01140.2"/>
    <property type="gene ID" value="AT3G01140"/>
</dbReference>
<dbReference type="GeneID" id="821209"/>
<dbReference type="Gramene" id="AT3G01140.2">
    <property type="protein sequence ID" value="AT3G01140.2"/>
    <property type="gene ID" value="AT3G01140"/>
</dbReference>
<dbReference type="KEGG" id="ath:AT3G01140"/>
<dbReference type="Araport" id="AT3G01140"/>
<dbReference type="TAIR" id="AT3G01140">
    <property type="gene designation" value="MYB106"/>
</dbReference>
<dbReference type="eggNOG" id="KOG0048">
    <property type="taxonomic scope" value="Eukaryota"/>
</dbReference>
<dbReference type="InParanoid" id="Q9LE63"/>
<dbReference type="OMA" id="GLHEFTM"/>
<dbReference type="PhylomeDB" id="Q9LE63"/>
<dbReference type="PRO" id="PR:Q9LE63"/>
<dbReference type="Proteomes" id="UP000006548">
    <property type="component" value="Chromosome 3"/>
</dbReference>
<dbReference type="ExpressionAtlas" id="Q9LE63">
    <property type="expression patterns" value="baseline and differential"/>
</dbReference>
<dbReference type="GO" id="GO:0005634">
    <property type="term" value="C:nucleus"/>
    <property type="evidence" value="ECO:0007669"/>
    <property type="project" value="UniProtKB-SubCell"/>
</dbReference>
<dbReference type="GO" id="GO:0003677">
    <property type="term" value="F:DNA binding"/>
    <property type="evidence" value="ECO:0007669"/>
    <property type="project" value="UniProtKB-KW"/>
</dbReference>
<dbReference type="GO" id="GO:0000902">
    <property type="term" value="P:cell morphogenesis"/>
    <property type="evidence" value="ECO:0000315"/>
    <property type="project" value="UniProtKB"/>
</dbReference>
<dbReference type="GO" id="GO:0035017">
    <property type="term" value="P:cuticle pattern formation"/>
    <property type="evidence" value="ECO:0000315"/>
    <property type="project" value="UniProtKB"/>
</dbReference>
<dbReference type="GO" id="GO:1901957">
    <property type="term" value="P:regulation of cutin biosynthetic process"/>
    <property type="evidence" value="ECO:0000315"/>
    <property type="project" value="UniProtKB"/>
</dbReference>
<dbReference type="GO" id="GO:0010091">
    <property type="term" value="P:trichome branching"/>
    <property type="evidence" value="ECO:0000315"/>
    <property type="project" value="UniProtKB"/>
</dbReference>
<dbReference type="CDD" id="cd00167">
    <property type="entry name" value="SANT"/>
    <property type="match status" value="2"/>
</dbReference>
<dbReference type="FunFam" id="1.10.10.60:FF:000099">
    <property type="entry name" value="MYB transcription factor"/>
    <property type="match status" value="1"/>
</dbReference>
<dbReference type="FunFam" id="1.10.10.60:FF:000015">
    <property type="entry name" value="Transcription factor RAX3"/>
    <property type="match status" value="1"/>
</dbReference>
<dbReference type="Gene3D" id="1.10.10.60">
    <property type="entry name" value="Homeodomain-like"/>
    <property type="match status" value="2"/>
</dbReference>
<dbReference type="InterPro" id="IPR009057">
    <property type="entry name" value="Homeodomain-like_sf"/>
</dbReference>
<dbReference type="InterPro" id="IPR017930">
    <property type="entry name" value="Myb_dom"/>
</dbReference>
<dbReference type="InterPro" id="IPR015495">
    <property type="entry name" value="Myb_TF_plants"/>
</dbReference>
<dbReference type="InterPro" id="IPR001005">
    <property type="entry name" value="SANT/Myb"/>
</dbReference>
<dbReference type="PANTHER" id="PTHR10641">
    <property type="entry name" value="MYB FAMILY TRANSCRIPTION FACTOR"/>
    <property type="match status" value="1"/>
</dbReference>
<dbReference type="PANTHER" id="PTHR10641:SF1417">
    <property type="entry name" value="TRANSCRIPTION FACTOR MYB106"/>
    <property type="match status" value="1"/>
</dbReference>
<dbReference type="Pfam" id="PF00249">
    <property type="entry name" value="Myb_DNA-binding"/>
    <property type="match status" value="2"/>
</dbReference>
<dbReference type="SMART" id="SM00717">
    <property type="entry name" value="SANT"/>
    <property type="match status" value="2"/>
</dbReference>
<dbReference type="SUPFAM" id="SSF46689">
    <property type="entry name" value="Homeodomain-like"/>
    <property type="match status" value="1"/>
</dbReference>
<dbReference type="PROSITE" id="PS51294">
    <property type="entry name" value="HTH_MYB"/>
    <property type="match status" value="2"/>
</dbReference>
<protein>
    <recommendedName>
        <fullName evidence="8">Transcription factor MYB106</fullName>
    </recommendedName>
    <alternativeName>
        <fullName evidence="6">Myb-related protein 106</fullName>
        <shortName evidence="6">AtMYB106</shortName>
    </alternativeName>
    <alternativeName>
        <fullName evidence="7">Transcription factor NOEK</fullName>
    </alternativeName>
</protein>
<proteinExistence type="evidence at transcript level"/>
<feature type="chain" id="PRO_0000439928" description="Transcription factor MYB106">
    <location>
        <begin position="1"/>
        <end position="345"/>
    </location>
</feature>
<feature type="domain" description="HTH myb-type 1" evidence="1">
    <location>
        <begin position="9"/>
        <end position="61"/>
    </location>
</feature>
<feature type="domain" description="HTH myb-type 2" evidence="1">
    <location>
        <begin position="62"/>
        <end position="116"/>
    </location>
</feature>
<feature type="DNA-binding region" description="H-T-H motif" evidence="1">
    <location>
        <begin position="37"/>
        <end position="61"/>
    </location>
</feature>
<feature type="DNA-binding region" description="H-T-H motif" evidence="1">
    <location>
        <begin position="89"/>
        <end position="112"/>
    </location>
</feature>
<feature type="sequence conflict" description="In Ref. 2; AAS10051." evidence="8" ref="2">
    <original>C</original>
    <variation>S</variation>
    <location>
        <position position="6"/>
    </location>
</feature>
<sequence>MGRSPCCDKAGLKKGPWTPEEDQKLLAYIEEHGHGSWRSLPEKAGLQRCGKSCRLRWTNYLRPDIKRGKFTVQEEQTIIQLHALLGNRWSAIATHLPKRTDNEIKNYWNTHLKKRLIKMGIDPVTHKHKNETLSSSTGQSKNAATLSHMAQWESARLEAEARLARESKLLHLQHYQNNNNLNKSAAPQQHCFTQKTSTNWTKPNQGNGDQQLESPTSTVTFSENLLMPLGIPTDSSRNRNNNNNESSAMIELAVSSSTSSDVSLVKEHEHDWIRQINCGSGGIGEGFTSLLIGDSVGRGLPTGKNEATAGVGNESEYNYYEDNKNYWNSILNLVDSSPSDSATMF</sequence>
<accession>Q9LE63</accession>
<accession>Q6R098</accession>
<reference key="1">
    <citation type="journal article" date="2001" name="Curr. Opin. Plant Biol.">
        <title>The R2R3-MYB gene family in Arabidopsis thaliana.</title>
        <authorList>
            <person name="Stracke R."/>
            <person name="Werber M."/>
            <person name="Weisshaar B."/>
        </authorList>
    </citation>
    <scope>NUCLEOTIDE SEQUENCE [MRNA]</scope>
    <scope>GENE FAMILY</scope>
    <scope>NOMENCLATURE</scope>
</reference>
<reference key="2">
    <citation type="submission" date="2004-01" db="EMBL/GenBank/DDBJ databases">
        <title>The MYB transcription factor family in Arabidopsis: a genome-wide cloning and expression pattern analysis.</title>
        <authorList>
            <person name="Qu L."/>
            <person name="Gu H."/>
        </authorList>
    </citation>
    <scope>NUCLEOTIDE SEQUENCE [MRNA]</scope>
</reference>
<reference key="3">
    <citation type="journal article" date="2000" name="Nature">
        <title>Sequence and analysis of chromosome 3 of the plant Arabidopsis thaliana.</title>
        <authorList>
            <person name="Salanoubat M."/>
            <person name="Lemcke K."/>
            <person name="Rieger M."/>
            <person name="Ansorge W."/>
            <person name="Unseld M."/>
            <person name="Fartmann B."/>
            <person name="Valle G."/>
            <person name="Bloecker H."/>
            <person name="Perez-Alonso M."/>
            <person name="Obermaier B."/>
            <person name="Delseny M."/>
            <person name="Boutry M."/>
            <person name="Grivell L.A."/>
            <person name="Mache R."/>
            <person name="Puigdomenech P."/>
            <person name="De Simone V."/>
            <person name="Choisne N."/>
            <person name="Artiguenave F."/>
            <person name="Robert C."/>
            <person name="Brottier P."/>
            <person name="Wincker P."/>
            <person name="Cattolico L."/>
            <person name="Weissenbach J."/>
            <person name="Saurin W."/>
            <person name="Quetier F."/>
            <person name="Schaefer M."/>
            <person name="Mueller-Auer S."/>
            <person name="Gabel C."/>
            <person name="Fuchs M."/>
            <person name="Benes V."/>
            <person name="Wurmbach E."/>
            <person name="Drzonek H."/>
            <person name="Erfle H."/>
            <person name="Jordan N."/>
            <person name="Bangert S."/>
            <person name="Wiedelmann R."/>
            <person name="Kranz H."/>
            <person name="Voss H."/>
            <person name="Holland R."/>
            <person name="Brandt P."/>
            <person name="Nyakatura G."/>
            <person name="Vezzi A."/>
            <person name="D'Angelo M."/>
            <person name="Pallavicini A."/>
            <person name="Toppo S."/>
            <person name="Simionati B."/>
            <person name="Conrad A."/>
            <person name="Hornischer K."/>
            <person name="Kauer G."/>
            <person name="Loehnert T.-H."/>
            <person name="Nordsiek G."/>
            <person name="Reichelt J."/>
            <person name="Scharfe M."/>
            <person name="Schoen O."/>
            <person name="Bargues M."/>
            <person name="Terol J."/>
            <person name="Climent J."/>
            <person name="Navarro P."/>
            <person name="Collado C."/>
            <person name="Perez-Perez A."/>
            <person name="Ottenwaelder B."/>
            <person name="Duchemin D."/>
            <person name="Cooke R."/>
            <person name="Laudie M."/>
            <person name="Berger-Llauro C."/>
            <person name="Purnelle B."/>
            <person name="Masuy D."/>
            <person name="de Haan M."/>
            <person name="Maarse A.C."/>
            <person name="Alcaraz J.-P."/>
            <person name="Cottet A."/>
            <person name="Casacuberta E."/>
            <person name="Monfort A."/>
            <person name="Argiriou A."/>
            <person name="Flores M."/>
            <person name="Liguori R."/>
            <person name="Vitale D."/>
            <person name="Mannhaupt G."/>
            <person name="Haase D."/>
            <person name="Schoof H."/>
            <person name="Rudd S."/>
            <person name="Zaccaria P."/>
            <person name="Mewes H.-W."/>
            <person name="Mayer K.F.X."/>
            <person name="Kaul S."/>
            <person name="Town C.D."/>
            <person name="Koo H.L."/>
            <person name="Tallon L.J."/>
            <person name="Jenkins J."/>
            <person name="Rooney T."/>
            <person name="Rizzo M."/>
            <person name="Walts A."/>
            <person name="Utterback T."/>
            <person name="Fujii C.Y."/>
            <person name="Shea T.P."/>
            <person name="Creasy T.H."/>
            <person name="Haas B."/>
            <person name="Maiti R."/>
            <person name="Wu D."/>
            <person name="Peterson J."/>
            <person name="Van Aken S."/>
            <person name="Pai G."/>
            <person name="Militscher J."/>
            <person name="Sellers P."/>
            <person name="Gill J.E."/>
            <person name="Feldblyum T.V."/>
            <person name="Preuss D."/>
            <person name="Lin X."/>
            <person name="Nierman W.C."/>
            <person name="Salzberg S.L."/>
            <person name="White O."/>
            <person name="Venter J.C."/>
            <person name="Fraser C.M."/>
            <person name="Kaneko T."/>
            <person name="Nakamura Y."/>
            <person name="Sato S."/>
            <person name="Kato T."/>
            <person name="Asamizu E."/>
            <person name="Sasamoto S."/>
            <person name="Kimura T."/>
            <person name="Idesawa K."/>
            <person name="Kawashima K."/>
            <person name="Kishida Y."/>
            <person name="Kiyokawa C."/>
            <person name="Kohara M."/>
            <person name="Matsumoto M."/>
            <person name="Matsuno A."/>
            <person name="Muraki A."/>
            <person name="Nakayama S."/>
            <person name="Nakazaki N."/>
            <person name="Shinpo S."/>
            <person name="Takeuchi C."/>
            <person name="Wada T."/>
            <person name="Watanabe A."/>
            <person name="Yamada M."/>
            <person name="Yasuda M."/>
            <person name="Tabata S."/>
        </authorList>
    </citation>
    <scope>NUCLEOTIDE SEQUENCE [LARGE SCALE GENOMIC DNA]</scope>
    <source>
        <strain>cv. Columbia</strain>
    </source>
</reference>
<reference key="4">
    <citation type="journal article" date="2017" name="Plant J.">
        <title>Araport11: a complete reannotation of the Arabidopsis thaliana reference genome.</title>
        <authorList>
            <person name="Cheng C.Y."/>
            <person name="Krishnakumar V."/>
            <person name="Chan A.P."/>
            <person name="Thibaud-Nissen F."/>
            <person name="Schobel S."/>
            <person name="Town C.D."/>
        </authorList>
    </citation>
    <scope>GENOME REANNOTATION</scope>
    <source>
        <strain>cv. Columbia</strain>
    </source>
</reference>
<reference key="5">
    <citation type="journal article" date="2008" name="Plant Physiol.">
        <title>Transcriptional profiling of mature Arabidopsis trichomes reveals that NOECK encodes the MIXTA-like transcriptional regulator MYB106.</title>
        <authorList>
            <person name="Jakoby M.J."/>
            <person name="Falkenhan D."/>
            <person name="Mader M.T."/>
            <person name="Brininstool G."/>
            <person name="Wischnitzki E."/>
            <person name="Platz N."/>
            <person name="Hudson A."/>
            <person name="Huelskamp M."/>
            <person name="Larkin J."/>
            <person name="Schnittger A."/>
        </authorList>
    </citation>
    <scope>FUNCTION</scope>
    <scope>TISSUE SPECIFICITY</scope>
    <scope>DISRUPTION PHENOTYPE</scope>
</reference>
<reference key="6">
    <citation type="journal article" date="2010" name="Plant J.">
        <title>Analysis of purified glabra3-shapeshifter trichomes reveals a role for NOECK in regulating early trichome morphogenic events.</title>
        <authorList>
            <person name="Gilding E.K."/>
            <person name="Marks M.D."/>
        </authorList>
    </citation>
    <scope>FUNCTION</scope>
</reference>
<reference key="7">
    <citation type="journal article" date="2013" name="Plant Cell">
        <title>MIXTA-like transcription factors and WAX INDUCER1/SHINE1 coordinately regulate cuticle development in Arabidopsis and Torenia fournieri.</title>
        <authorList>
            <person name="Oshima Y."/>
            <person name="Shikata M."/>
            <person name="Koyama T."/>
            <person name="Ohtsubo N."/>
            <person name="Mitsuda N."/>
            <person name="Ohme-Takagi M."/>
        </authorList>
    </citation>
    <scope>FUNCTION</scope>
</reference>
<reference key="8">
    <citation type="journal article" date="2013" name="Plant Signal. Behav.">
        <title>The MIXTA-like transcription factor MYB16 is a major regulator of cuticle formation in vegetative organs.</title>
        <authorList>
            <person name="Oshima Y."/>
            <person name="Mitsuda N."/>
        </authorList>
    </citation>
    <scope>FUNCTION</scope>
</reference>